<gene>
    <name evidence="1" type="primary">cysS</name>
    <name type="ordered locus">TGRD_692</name>
</gene>
<accession>B1GYT2</accession>
<proteinExistence type="inferred from homology"/>
<sequence length="465" mass="53363">MTIKIHNTLSNKKEEFYPQRGNFVSMYVCGITPYDEVHLGHARVYVVFDIVKRHLLRRGYIVKHIQNFTDVDDKIVKRSQEKNMKPSELAQIYIEDYFVQAGRLNILKAEKYPCVTQMIPEIVNFIKELVNKGLAYEIGGDIYFSVEKFKDYGKLSKRNLKDLRAGARVGVCNGKNSAFDFALWKKTKENEPREVTWESPWGKGRPGWHIECSAMSSELLGDTIDIHGGGQDLIFPHHENEIAQSEAKTGKKFVKYWIHNGFVTINKEKMSKSLNNFFTLKAIFEKYNPRVVRYYLLTQHYSSPLDFSDAGIESARNTLQGMDGTYLRLISSVKESDVEITDKDLSDLQGNFLSALDDDFNSEKALSYLHELKGLISKGLLTAGRERLSQLKKLFEDFAGTSLGILLPEEQNADESLQNLLKERNDARKNKNWAESDRVRKLIIDERGYKIFDNKDGSSLLVKKV</sequence>
<name>SYC_ENDTX</name>
<evidence type="ECO:0000255" key="1">
    <source>
        <dbReference type="HAMAP-Rule" id="MF_00041"/>
    </source>
</evidence>
<dbReference type="EC" id="6.1.1.16" evidence="1"/>
<dbReference type="EMBL" id="AP009510">
    <property type="protein sequence ID" value="BAG14175.1"/>
    <property type="molecule type" value="Genomic_DNA"/>
</dbReference>
<dbReference type="RefSeq" id="WP_015423696.1">
    <property type="nucleotide sequence ID" value="NC_020419.1"/>
</dbReference>
<dbReference type="SMR" id="B1GYT2"/>
<dbReference type="STRING" id="471821.TGRD_692"/>
<dbReference type="KEGG" id="rsd:TGRD_692"/>
<dbReference type="PATRIC" id="fig|471821.5.peg.1180"/>
<dbReference type="HOGENOM" id="CLU_013528_0_1_0"/>
<dbReference type="Proteomes" id="UP000001691">
    <property type="component" value="Chromosome"/>
</dbReference>
<dbReference type="GO" id="GO:0005737">
    <property type="term" value="C:cytoplasm"/>
    <property type="evidence" value="ECO:0007669"/>
    <property type="project" value="UniProtKB-SubCell"/>
</dbReference>
<dbReference type="GO" id="GO:0005524">
    <property type="term" value="F:ATP binding"/>
    <property type="evidence" value="ECO:0007669"/>
    <property type="project" value="UniProtKB-UniRule"/>
</dbReference>
<dbReference type="GO" id="GO:0004817">
    <property type="term" value="F:cysteine-tRNA ligase activity"/>
    <property type="evidence" value="ECO:0007669"/>
    <property type="project" value="UniProtKB-UniRule"/>
</dbReference>
<dbReference type="GO" id="GO:0008270">
    <property type="term" value="F:zinc ion binding"/>
    <property type="evidence" value="ECO:0007669"/>
    <property type="project" value="UniProtKB-UniRule"/>
</dbReference>
<dbReference type="GO" id="GO:0006423">
    <property type="term" value="P:cysteinyl-tRNA aminoacylation"/>
    <property type="evidence" value="ECO:0007669"/>
    <property type="project" value="UniProtKB-UniRule"/>
</dbReference>
<dbReference type="CDD" id="cd00672">
    <property type="entry name" value="CysRS_core"/>
    <property type="match status" value="1"/>
</dbReference>
<dbReference type="FunFam" id="3.40.50.620:FF:000009">
    <property type="entry name" value="Cysteine--tRNA ligase"/>
    <property type="match status" value="1"/>
</dbReference>
<dbReference type="Gene3D" id="1.20.120.1910">
    <property type="entry name" value="Cysteine-tRNA ligase, C-terminal anti-codon recognition domain"/>
    <property type="match status" value="1"/>
</dbReference>
<dbReference type="Gene3D" id="3.40.50.620">
    <property type="entry name" value="HUPs"/>
    <property type="match status" value="1"/>
</dbReference>
<dbReference type="HAMAP" id="MF_00041">
    <property type="entry name" value="Cys_tRNA_synth"/>
    <property type="match status" value="1"/>
</dbReference>
<dbReference type="InterPro" id="IPR015803">
    <property type="entry name" value="Cys-tRNA-ligase"/>
</dbReference>
<dbReference type="InterPro" id="IPR015273">
    <property type="entry name" value="Cys-tRNA-synt_Ia_DALR"/>
</dbReference>
<dbReference type="InterPro" id="IPR024909">
    <property type="entry name" value="Cys-tRNA/MSH_ligase"/>
</dbReference>
<dbReference type="InterPro" id="IPR014729">
    <property type="entry name" value="Rossmann-like_a/b/a_fold"/>
</dbReference>
<dbReference type="InterPro" id="IPR032678">
    <property type="entry name" value="tRNA-synt_1_cat_dom"/>
</dbReference>
<dbReference type="InterPro" id="IPR009080">
    <property type="entry name" value="tRNAsynth_Ia_anticodon-bd"/>
</dbReference>
<dbReference type="NCBIfam" id="TIGR00435">
    <property type="entry name" value="cysS"/>
    <property type="match status" value="1"/>
</dbReference>
<dbReference type="PANTHER" id="PTHR10890">
    <property type="entry name" value="CYSTEINYL-TRNA SYNTHETASE"/>
    <property type="match status" value="1"/>
</dbReference>
<dbReference type="Pfam" id="PF09190">
    <property type="entry name" value="DALR_2"/>
    <property type="match status" value="1"/>
</dbReference>
<dbReference type="Pfam" id="PF01406">
    <property type="entry name" value="tRNA-synt_1e"/>
    <property type="match status" value="1"/>
</dbReference>
<dbReference type="PRINTS" id="PR00983">
    <property type="entry name" value="TRNASYNTHCYS"/>
</dbReference>
<dbReference type="SMART" id="SM00840">
    <property type="entry name" value="DALR_2"/>
    <property type="match status" value="1"/>
</dbReference>
<dbReference type="SUPFAM" id="SSF47323">
    <property type="entry name" value="Anticodon-binding domain of a subclass of class I aminoacyl-tRNA synthetases"/>
    <property type="match status" value="1"/>
</dbReference>
<dbReference type="SUPFAM" id="SSF52374">
    <property type="entry name" value="Nucleotidylyl transferase"/>
    <property type="match status" value="1"/>
</dbReference>
<comment type="catalytic activity">
    <reaction evidence="1">
        <text>tRNA(Cys) + L-cysteine + ATP = L-cysteinyl-tRNA(Cys) + AMP + diphosphate</text>
        <dbReference type="Rhea" id="RHEA:17773"/>
        <dbReference type="Rhea" id="RHEA-COMP:9661"/>
        <dbReference type="Rhea" id="RHEA-COMP:9679"/>
        <dbReference type="ChEBI" id="CHEBI:30616"/>
        <dbReference type="ChEBI" id="CHEBI:33019"/>
        <dbReference type="ChEBI" id="CHEBI:35235"/>
        <dbReference type="ChEBI" id="CHEBI:78442"/>
        <dbReference type="ChEBI" id="CHEBI:78517"/>
        <dbReference type="ChEBI" id="CHEBI:456215"/>
        <dbReference type="EC" id="6.1.1.16"/>
    </reaction>
</comment>
<comment type="cofactor">
    <cofactor evidence="1">
        <name>Zn(2+)</name>
        <dbReference type="ChEBI" id="CHEBI:29105"/>
    </cofactor>
    <text evidence="1">Binds 1 zinc ion per subunit.</text>
</comment>
<comment type="subunit">
    <text evidence="1">Monomer.</text>
</comment>
<comment type="subcellular location">
    <subcellularLocation>
        <location evidence="1">Cytoplasm</location>
    </subcellularLocation>
</comment>
<comment type="similarity">
    <text evidence="1">Belongs to the class-I aminoacyl-tRNA synthetase family.</text>
</comment>
<protein>
    <recommendedName>
        <fullName evidence="1">Cysteine--tRNA ligase</fullName>
        <ecNumber evidence="1">6.1.1.16</ecNumber>
    </recommendedName>
    <alternativeName>
        <fullName evidence="1">Cysteinyl-tRNA synthetase</fullName>
        <shortName evidence="1">CysRS</shortName>
    </alternativeName>
</protein>
<feature type="chain" id="PRO_1000199090" description="Cysteine--tRNA ligase">
    <location>
        <begin position="1"/>
        <end position="465"/>
    </location>
</feature>
<feature type="short sequence motif" description="'HIGH' region">
    <location>
        <begin position="31"/>
        <end position="41"/>
    </location>
</feature>
<feature type="short sequence motif" description="'KMSKS' region">
    <location>
        <begin position="269"/>
        <end position="273"/>
    </location>
</feature>
<feature type="binding site" evidence="1">
    <location>
        <position position="29"/>
    </location>
    <ligand>
        <name>Zn(2+)</name>
        <dbReference type="ChEBI" id="CHEBI:29105"/>
    </ligand>
</feature>
<feature type="binding site" evidence="1">
    <location>
        <position position="212"/>
    </location>
    <ligand>
        <name>Zn(2+)</name>
        <dbReference type="ChEBI" id="CHEBI:29105"/>
    </ligand>
</feature>
<feature type="binding site" evidence="1">
    <location>
        <position position="237"/>
    </location>
    <ligand>
        <name>Zn(2+)</name>
        <dbReference type="ChEBI" id="CHEBI:29105"/>
    </ligand>
</feature>
<feature type="binding site" evidence="1">
    <location>
        <position position="241"/>
    </location>
    <ligand>
        <name>Zn(2+)</name>
        <dbReference type="ChEBI" id="CHEBI:29105"/>
    </ligand>
</feature>
<feature type="binding site" evidence="1">
    <location>
        <position position="272"/>
    </location>
    <ligand>
        <name>ATP</name>
        <dbReference type="ChEBI" id="CHEBI:30616"/>
    </ligand>
</feature>
<keyword id="KW-0030">Aminoacyl-tRNA synthetase</keyword>
<keyword id="KW-0067">ATP-binding</keyword>
<keyword id="KW-0963">Cytoplasm</keyword>
<keyword id="KW-0436">Ligase</keyword>
<keyword id="KW-0479">Metal-binding</keyword>
<keyword id="KW-0547">Nucleotide-binding</keyword>
<keyword id="KW-0648">Protein biosynthesis</keyword>
<keyword id="KW-0862">Zinc</keyword>
<reference key="1">
    <citation type="journal article" date="2008" name="Proc. Natl. Acad. Sci. U.S.A.">
        <title>Complete genome of the uncultured termite group 1 bacteria in a single host protist cell.</title>
        <authorList>
            <person name="Hongoh Y."/>
            <person name="Sharma V.K."/>
            <person name="Prakash T."/>
            <person name="Noda S."/>
            <person name="Taylor T.D."/>
            <person name="Kudo T."/>
            <person name="Sakaki Y."/>
            <person name="Toyoda A."/>
            <person name="Hattori M."/>
            <person name="Ohkuma M."/>
        </authorList>
    </citation>
    <scope>NUCLEOTIDE SEQUENCE [LARGE SCALE GENOMIC DNA]</scope>
</reference>
<organism>
    <name type="scientific">Endomicrobium trichonymphae</name>
    <dbReference type="NCBI Taxonomy" id="1408204"/>
    <lineage>
        <taxon>Bacteria</taxon>
        <taxon>Pseudomonadati</taxon>
        <taxon>Elusimicrobiota</taxon>
        <taxon>Endomicrobiia</taxon>
        <taxon>Endomicrobiales</taxon>
        <taxon>Endomicrobiaceae</taxon>
        <taxon>Candidatus Endomicrobiellum</taxon>
    </lineage>
</organism>